<protein>
    <recommendedName>
        <fullName evidence="1">Argininosuccinate synthase</fullName>
        <ecNumber evidence="1">6.3.4.5</ecNumber>
    </recommendedName>
    <alternativeName>
        <fullName evidence="1">Citrulline--aspartate ligase</fullName>
    </alternativeName>
</protein>
<dbReference type="EC" id="6.3.4.5" evidence="1"/>
<dbReference type="EMBL" id="CP000924">
    <property type="protein sequence ID" value="ABY93901.1"/>
    <property type="molecule type" value="Genomic_DNA"/>
</dbReference>
<dbReference type="RefSeq" id="WP_012268936.1">
    <property type="nucleotide sequence ID" value="NC_010321.1"/>
</dbReference>
<dbReference type="SMR" id="B0KBW5"/>
<dbReference type="STRING" id="340099.Teth39_0229"/>
<dbReference type="KEGG" id="tpd:Teth39_0229"/>
<dbReference type="eggNOG" id="COG0137">
    <property type="taxonomic scope" value="Bacteria"/>
</dbReference>
<dbReference type="HOGENOM" id="CLU_032784_4_2_9"/>
<dbReference type="UniPathway" id="UPA00068">
    <property type="reaction ID" value="UER00113"/>
</dbReference>
<dbReference type="Proteomes" id="UP000002156">
    <property type="component" value="Chromosome"/>
</dbReference>
<dbReference type="GO" id="GO:0005737">
    <property type="term" value="C:cytoplasm"/>
    <property type="evidence" value="ECO:0007669"/>
    <property type="project" value="UniProtKB-SubCell"/>
</dbReference>
<dbReference type="GO" id="GO:0004055">
    <property type="term" value="F:argininosuccinate synthase activity"/>
    <property type="evidence" value="ECO:0007669"/>
    <property type="project" value="UniProtKB-UniRule"/>
</dbReference>
<dbReference type="GO" id="GO:0005524">
    <property type="term" value="F:ATP binding"/>
    <property type="evidence" value="ECO:0007669"/>
    <property type="project" value="UniProtKB-UniRule"/>
</dbReference>
<dbReference type="GO" id="GO:0000053">
    <property type="term" value="P:argininosuccinate metabolic process"/>
    <property type="evidence" value="ECO:0007669"/>
    <property type="project" value="TreeGrafter"/>
</dbReference>
<dbReference type="GO" id="GO:0006526">
    <property type="term" value="P:L-arginine biosynthetic process"/>
    <property type="evidence" value="ECO:0007669"/>
    <property type="project" value="UniProtKB-UniRule"/>
</dbReference>
<dbReference type="GO" id="GO:0000050">
    <property type="term" value="P:urea cycle"/>
    <property type="evidence" value="ECO:0007669"/>
    <property type="project" value="TreeGrafter"/>
</dbReference>
<dbReference type="CDD" id="cd01999">
    <property type="entry name" value="ASS"/>
    <property type="match status" value="1"/>
</dbReference>
<dbReference type="FunFam" id="3.40.50.620:FF:000019">
    <property type="entry name" value="Argininosuccinate synthase"/>
    <property type="match status" value="1"/>
</dbReference>
<dbReference type="FunFam" id="3.90.1260.10:FF:000007">
    <property type="entry name" value="Argininosuccinate synthase"/>
    <property type="match status" value="1"/>
</dbReference>
<dbReference type="Gene3D" id="3.90.1260.10">
    <property type="entry name" value="Argininosuccinate synthetase, chain A, domain 2"/>
    <property type="match status" value="1"/>
</dbReference>
<dbReference type="Gene3D" id="3.40.50.620">
    <property type="entry name" value="HUPs"/>
    <property type="match status" value="1"/>
</dbReference>
<dbReference type="Gene3D" id="1.20.5.470">
    <property type="entry name" value="Single helix bin"/>
    <property type="match status" value="1"/>
</dbReference>
<dbReference type="HAMAP" id="MF_00005">
    <property type="entry name" value="Arg_succ_synth_type1"/>
    <property type="match status" value="1"/>
</dbReference>
<dbReference type="InterPro" id="IPR048268">
    <property type="entry name" value="Arginosuc_syn_C"/>
</dbReference>
<dbReference type="InterPro" id="IPR048267">
    <property type="entry name" value="Arginosuc_syn_N"/>
</dbReference>
<dbReference type="InterPro" id="IPR001518">
    <property type="entry name" value="Arginosuc_synth"/>
</dbReference>
<dbReference type="InterPro" id="IPR018223">
    <property type="entry name" value="Arginosuc_synth_CS"/>
</dbReference>
<dbReference type="InterPro" id="IPR023434">
    <property type="entry name" value="Arginosuc_synth_type_1_subfam"/>
</dbReference>
<dbReference type="InterPro" id="IPR024074">
    <property type="entry name" value="AS_cat/multimer_dom_body"/>
</dbReference>
<dbReference type="InterPro" id="IPR014729">
    <property type="entry name" value="Rossmann-like_a/b/a_fold"/>
</dbReference>
<dbReference type="NCBIfam" id="TIGR00032">
    <property type="entry name" value="argG"/>
    <property type="match status" value="1"/>
</dbReference>
<dbReference type="NCBIfam" id="NF001770">
    <property type="entry name" value="PRK00509.1"/>
    <property type="match status" value="1"/>
</dbReference>
<dbReference type="PANTHER" id="PTHR11587">
    <property type="entry name" value="ARGININOSUCCINATE SYNTHASE"/>
    <property type="match status" value="1"/>
</dbReference>
<dbReference type="PANTHER" id="PTHR11587:SF2">
    <property type="entry name" value="ARGININOSUCCINATE SYNTHASE"/>
    <property type="match status" value="1"/>
</dbReference>
<dbReference type="Pfam" id="PF20979">
    <property type="entry name" value="Arginosuc_syn_C"/>
    <property type="match status" value="1"/>
</dbReference>
<dbReference type="Pfam" id="PF00764">
    <property type="entry name" value="Arginosuc_synth"/>
    <property type="match status" value="1"/>
</dbReference>
<dbReference type="SUPFAM" id="SSF52402">
    <property type="entry name" value="Adenine nucleotide alpha hydrolases-like"/>
    <property type="match status" value="1"/>
</dbReference>
<dbReference type="SUPFAM" id="SSF69864">
    <property type="entry name" value="Argininosuccinate synthetase, C-terminal domain"/>
    <property type="match status" value="1"/>
</dbReference>
<dbReference type="PROSITE" id="PS00564">
    <property type="entry name" value="ARGININOSUCCIN_SYN_1"/>
    <property type="match status" value="1"/>
</dbReference>
<dbReference type="PROSITE" id="PS00565">
    <property type="entry name" value="ARGININOSUCCIN_SYN_2"/>
    <property type="match status" value="1"/>
</dbReference>
<name>ASSY_THEP3</name>
<accession>B0KBW5</accession>
<reference key="1">
    <citation type="submission" date="2008-01" db="EMBL/GenBank/DDBJ databases">
        <title>Complete sequence of Thermoanaerobacter pseudethanolicus 39E.</title>
        <authorList>
            <person name="Copeland A."/>
            <person name="Lucas S."/>
            <person name="Lapidus A."/>
            <person name="Barry K."/>
            <person name="Glavina del Rio T."/>
            <person name="Dalin E."/>
            <person name="Tice H."/>
            <person name="Pitluck S."/>
            <person name="Bruce D."/>
            <person name="Goodwin L."/>
            <person name="Saunders E."/>
            <person name="Brettin T."/>
            <person name="Detter J.C."/>
            <person name="Han C."/>
            <person name="Schmutz J."/>
            <person name="Larimer F."/>
            <person name="Land M."/>
            <person name="Hauser L."/>
            <person name="Kyrpides N."/>
            <person name="Lykidis A."/>
            <person name="Hemme C."/>
            <person name="Fields M.W."/>
            <person name="He Z."/>
            <person name="Zhou J."/>
            <person name="Richardson P."/>
        </authorList>
    </citation>
    <scope>NUCLEOTIDE SEQUENCE [LARGE SCALE GENOMIC DNA]</scope>
    <source>
        <strain>ATCC 33223 / DSM 2355 / 39E</strain>
    </source>
</reference>
<sequence>MLKGEKVVLAYSGGLDTSVIIPWLKENYECEIIAACINVGQGEELKYIKDKALASGASKVYIEDVKEEFVKDYIFPTLKAGAVYEGKYLLGTSMARPLIAKKLVEIAHKEGAKAIAHGATGKGNDQVRFEVSIHALDPSIKIIAPWRIWDLKSREDEIDYAKKKGIPIPATYEKIYSVDNNLWHVSHEGGDLEDPWNEPKSDLYDIITPPDKAPDKPEYVLIEFEKGIPVKVNGKALEPVKLIEELNAIAGRNGVGIADLVENRLVGMKSRGVYETPAGTLLYAAHKELEYLVLDKETMRFKDLVSQKYADLVYNGLWFSPLKAALDAFVEETQKNVTGVVRLKLYKGNVINAGVKSPYSLYNQEFVTFGKDEVYNQKDAEGFINLFGLSLKIKALMEMERKDMDEAVGR</sequence>
<gene>
    <name evidence="1" type="primary">argG</name>
    <name type="ordered locus">Teth39_0229</name>
</gene>
<feature type="chain" id="PRO_1000089057" description="Argininosuccinate synthase">
    <location>
        <begin position="1"/>
        <end position="410"/>
    </location>
</feature>
<feature type="binding site" evidence="1">
    <location>
        <begin position="10"/>
        <end position="18"/>
    </location>
    <ligand>
        <name>ATP</name>
        <dbReference type="ChEBI" id="CHEBI:30616"/>
    </ligand>
</feature>
<feature type="binding site" evidence="1">
    <location>
        <position position="88"/>
    </location>
    <ligand>
        <name>L-citrulline</name>
        <dbReference type="ChEBI" id="CHEBI:57743"/>
    </ligand>
</feature>
<feature type="binding site" evidence="1">
    <location>
        <position position="93"/>
    </location>
    <ligand>
        <name>L-citrulline</name>
        <dbReference type="ChEBI" id="CHEBI:57743"/>
    </ligand>
</feature>
<feature type="binding site" evidence="1">
    <location>
        <position position="118"/>
    </location>
    <ligand>
        <name>ATP</name>
        <dbReference type="ChEBI" id="CHEBI:30616"/>
    </ligand>
</feature>
<feature type="binding site" evidence="1">
    <location>
        <position position="120"/>
    </location>
    <ligand>
        <name>L-aspartate</name>
        <dbReference type="ChEBI" id="CHEBI:29991"/>
    </ligand>
</feature>
<feature type="binding site" evidence="1">
    <location>
        <position position="124"/>
    </location>
    <ligand>
        <name>L-aspartate</name>
        <dbReference type="ChEBI" id="CHEBI:29991"/>
    </ligand>
</feature>
<feature type="binding site" evidence="1">
    <location>
        <position position="124"/>
    </location>
    <ligand>
        <name>L-citrulline</name>
        <dbReference type="ChEBI" id="CHEBI:57743"/>
    </ligand>
</feature>
<feature type="binding site" evidence="1">
    <location>
        <position position="125"/>
    </location>
    <ligand>
        <name>L-aspartate</name>
        <dbReference type="ChEBI" id="CHEBI:29991"/>
    </ligand>
</feature>
<feature type="binding site" evidence="1">
    <location>
        <position position="128"/>
    </location>
    <ligand>
        <name>L-citrulline</name>
        <dbReference type="ChEBI" id="CHEBI:57743"/>
    </ligand>
</feature>
<feature type="binding site" evidence="1">
    <location>
        <position position="177"/>
    </location>
    <ligand>
        <name>L-citrulline</name>
        <dbReference type="ChEBI" id="CHEBI:57743"/>
    </ligand>
</feature>
<feature type="binding site" evidence="1">
    <location>
        <position position="186"/>
    </location>
    <ligand>
        <name>L-citrulline</name>
        <dbReference type="ChEBI" id="CHEBI:57743"/>
    </ligand>
</feature>
<feature type="binding site" evidence="1">
    <location>
        <position position="262"/>
    </location>
    <ligand>
        <name>L-citrulline</name>
        <dbReference type="ChEBI" id="CHEBI:57743"/>
    </ligand>
</feature>
<feature type="binding site" evidence="1">
    <location>
        <position position="274"/>
    </location>
    <ligand>
        <name>L-citrulline</name>
        <dbReference type="ChEBI" id="CHEBI:57743"/>
    </ligand>
</feature>
<evidence type="ECO:0000255" key="1">
    <source>
        <dbReference type="HAMAP-Rule" id="MF_00005"/>
    </source>
</evidence>
<organism>
    <name type="scientific">Thermoanaerobacter pseudethanolicus (strain ATCC 33223 / 39E)</name>
    <name type="common">Clostridium thermohydrosulfuricum</name>
    <dbReference type="NCBI Taxonomy" id="340099"/>
    <lineage>
        <taxon>Bacteria</taxon>
        <taxon>Bacillati</taxon>
        <taxon>Bacillota</taxon>
        <taxon>Clostridia</taxon>
        <taxon>Thermoanaerobacterales</taxon>
        <taxon>Thermoanaerobacteraceae</taxon>
        <taxon>Thermoanaerobacter</taxon>
    </lineage>
</organism>
<proteinExistence type="inferred from homology"/>
<comment type="catalytic activity">
    <reaction evidence="1">
        <text>L-citrulline + L-aspartate + ATP = 2-(N(omega)-L-arginino)succinate + AMP + diphosphate + H(+)</text>
        <dbReference type="Rhea" id="RHEA:10932"/>
        <dbReference type="ChEBI" id="CHEBI:15378"/>
        <dbReference type="ChEBI" id="CHEBI:29991"/>
        <dbReference type="ChEBI" id="CHEBI:30616"/>
        <dbReference type="ChEBI" id="CHEBI:33019"/>
        <dbReference type="ChEBI" id="CHEBI:57472"/>
        <dbReference type="ChEBI" id="CHEBI:57743"/>
        <dbReference type="ChEBI" id="CHEBI:456215"/>
        <dbReference type="EC" id="6.3.4.5"/>
    </reaction>
</comment>
<comment type="pathway">
    <text evidence="1">Amino-acid biosynthesis; L-arginine biosynthesis; L-arginine from L-ornithine and carbamoyl phosphate: step 2/3.</text>
</comment>
<comment type="subunit">
    <text evidence="1">Homotetramer.</text>
</comment>
<comment type="subcellular location">
    <subcellularLocation>
        <location evidence="1">Cytoplasm</location>
    </subcellularLocation>
</comment>
<comment type="similarity">
    <text evidence="1">Belongs to the argininosuccinate synthase family. Type 1 subfamily.</text>
</comment>
<keyword id="KW-0028">Amino-acid biosynthesis</keyword>
<keyword id="KW-0055">Arginine biosynthesis</keyword>
<keyword id="KW-0067">ATP-binding</keyword>
<keyword id="KW-0963">Cytoplasm</keyword>
<keyword id="KW-0436">Ligase</keyword>
<keyword id="KW-0547">Nucleotide-binding</keyword>
<keyword id="KW-1185">Reference proteome</keyword>